<feature type="chain" id="PRO_1000077826" description="UvrABC system protein C">
    <location>
        <begin position="1"/>
        <end position="638"/>
    </location>
</feature>
<feature type="domain" description="GIY-YIG" evidence="1">
    <location>
        <begin position="20"/>
        <end position="97"/>
    </location>
</feature>
<feature type="domain" description="UVR" evidence="1">
    <location>
        <begin position="209"/>
        <end position="244"/>
    </location>
</feature>
<protein>
    <recommendedName>
        <fullName evidence="1">UvrABC system protein C</fullName>
        <shortName evidence="1">Protein UvrC</shortName>
    </recommendedName>
    <alternativeName>
        <fullName evidence="1">Excinuclease ABC subunit C</fullName>
    </alternativeName>
</protein>
<accession>A8EYB9</accession>
<organism>
    <name type="scientific">Rickettsia canadensis (strain McKiel)</name>
    <dbReference type="NCBI Taxonomy" id="293613"/>
    <lineage>
        <taxon>Bacteria</taxon>
        <taxon>Pseudomonadati</taxon>
        <taxon>Pseudomonadota</taxon>
        <taxon>Alphaproteobacteria</taxon>
        <taxon>Rickettsiales</taxon>
        <taxon>Rickettsiaceae</taxon>
        <taxon>Rickettsieae</taxon>
        <taxon>Rickettsia</taxon>
        <taxon>belli group</taxon>
    </lineage>
</organism>
<keyword id="KW-0963">Cytoplasm</keyword>
<keyword id="KW-0227">DNA damage</keyword>
<keyword id="KW-0228">DNA excision</keyword>
<keyword id="KW-0234">DNA repair</keyword>
<keyword id="KW-0267">Excision nuclease</keyword>
<keyword id="KW-0742">SOS response</keyword>
<reference key="1">
    <citation type="submission" date="2007-09" db="EMBL/GenBank/DDBJ databases">
        <title>Complete genome sequence of Rickettsia canadensis.</title>
        <authorList>
            <person name="Madan A."/>
            <person name="Fahey J."/>
            <person name="Helton E."/>
            <person name="Ketteman M."/>
            <person name="Madan A."/>
            <person name="Rodrigues S."/>
            <person name="Sanchez A."/>
            <person name="Whiting M."/>
            <person name="Dasch G."/>
            <person name="Eremeeva M."/>
        </authorList>
    </citation>
    <scope>NUCLEOTIDE SEQUENCE [LARGE SCALE GENOMIC DNA]</scope>
    <source>
        <strain>McKiel</strain>
    </source>
</reference>
<evidence type="ECO:0000255" key="1">
    <source>
        <dbReference type="HAMAP-Rule" id="MF_00203"/>
    </source>
</evidence>
<name>UVRC_RICCK</name>
<gene>
    <name evidence="1" type="primary">uvrC</name>
    <name type="ordered locus">A1E_02035</name>
</gene>
<dbReference type="EMBL" id="CP000409">
    <property type="protein sequence ID" value="ABV73352.1"/>
    <property type="molecule type" value="Genomic_DNA"/>
</dbReference>
<dbReference type="RefSeq" id="WP_012148551.1">
    <property type="nucleotide sequence ID" value="NC_009879.1"/>
</dbReference>
<dbReference type="SMR" id="A8EYB9"/>
<dbReference type="STRING" id="293613.A1E_02035"/>
<dbReference type="KEGG" id="rcm:A1E_02035"/>
<dbReference type="eggNOG" id="COG0322">
    <property type="taxonomic scope" value="Bacteria"/>
</dbReference>
<dbReference type="HOGENOM" id="CLU_014841_3_0_5"/>
<dbReference type="Proteomes" id="UP000007056">
    <property type="component" value="Chromosome"/>
</dbReference>
<dbReference type="GO" id="GO:0005737">
    <property type="term" value="C:cytoplasm"/>
    <property type="evidence" value="ECO:0007669"/>
    <property type="project" value="UniProtKB-SubCell"/>
</dbReference>
<dbReference type="GO" id="GO:0009380">
    <property type="term" value="C:excinuclease repair complex"/>
    <property type="evidence" value="ECO:0007669"/>
    <property type="project" value="InterPro"/>
</dbReference>
<dbReference type="GO" id="GO:0003677">
    <property type="term" value="F:DNA binding"/>
    <property type="evidence" value="ECO:0007669"/>
    <property type="project" value="UniProtKB-UniRule"/>
</dbReference>
<dbReference type="GO" id="GO:0009381">
    <property type="term" value="F:excinuclease ABC activity"/>
    <property type="evidence" value="ECO:0007669"/>
    <property type="project" value="UniProtKB-UniRule"/>
</dbReference>
<dbReference type="GO" id="GO:0006289">
    <property type="term" value="P:nucleotide-excision repair"/>
    <property type="evidence" value="ECO:0007669"/>
    <property type="project" value="UniProtKB-UniRule"/>
</dbReference>
<dbReference type="GO" id="GO:0009432">
    <property type="term" value="P:SOS response"/>
    <property type="evidence" value="ECO:0007669"/>
    <property type="project" value="UniProtKB-UniRule"/>
</dbReference>
<dbReference type="CDD" id="cd10434">
    <property type="entry name" value="GIY-YIG_UvrC_Cho"/>
    <property type="match status" value="1"/>
</dbReference>
<dbReference type="FunFam" id="3.40.1440.10:FF:000001">
    <property type="entry name" value="UvrABC system protein C"/>
    <property type="match status" value="1"/>
</dbReference>
<dbReference type="Gene3D" id="1.10.150.20">
    <property type="entry name" value="5' to 3' exonuclease, C-terminal subdomain"/>
    <property type="match status" value="1"/>
</dbReference>
<dbReference type="Gene3D" id="3.40.1440.10">
    <property type="entry name" value="GIY-YIG endonuclease"/>
    <property type="match status" value="1"/>
</dbReference>
<dbReference type="Gene3D" id="4.10.860.10">
    <property type="entry name" value="UVR domain"/>
    <property type="match status" value="1"/>
</dbReference>
<dbReference type="Gene3D" id="3.30.420.340">
    <property type="entry name" value="UvrC, RNAse H endonuclease domain"/>
    <property type="match status" value="1"/>
</dbReference>
<dbReference type="HAMAP" id="MF_00203">
    <property type="entry name" value="UvrC"/>
    <property type="match status" value="1"/>
</dbReference>
<dbReference type="InterPro" id="IPR000305">
    <property type="entry name" value="GIY-YIG_endonuc"/>
</dbReference>
<dbReference type="InterPro" id="IPR035901">
    <property type="entry name" value="GIY-YIG_endonuc_sf"/>
</dbReference>
<dbReference type="InterPro" id="IPR047296">
    <property type="entry name" value="GIY-YIG_UvrC_Cho"/>
</dbReference>
<dbReference type="InterPro" id="IPR003583">
    <property type="entry name" value="Hlx-hairpin-Hlx_DNA-bd_motif"/>
</dbReference>
<dbReference type="InterPro" id="IPR010994">
    <property type="entry name" value="RuvA_2-like"/>
</dbReference>
<dbReference type="InterPro" id="IPR001943">
    <property type="entry name" value="UVR_dom"/>
</dbReference>
<dbReference type="InterPro" id="IPR036876">
    <property type="entry name" value="UVR_dom_sf"/>
</dbReference>
<dbReference type="InterPro" id="IPR050066">
    <property type="entry name" value="UvrABC_protein_C"/>
</dbReference>
<dbReference type="InterPro" id="IPR004791">
    <property type="entry name" value="UvrC"/>
</dbReference>
<dbReference type="InterPro" id="IPR001162">
    <property type="entry name" value="UvrC_RNase_H_dom"/>
</dbReference>
<dbReference type="InterPro" id="IPR038476">
    <property type="entry name" value="UvrC_RNase_H_dom_sf"/>
</dbReference>
<dbReference type="NCBIfam" id="TIGR00194">
    <property type="entry name" value="uvrC"/>
    <property type="match status" value="1"/>
</dbReference>
<dbReference type="PANTHER" id="PTHR30562:SF1">
    <property type="entry name" value="UVRABC SYSTEM PROTEIN C"/>
    <property type="match status" value="1"/>
</dbReference>
<dbReference type="PANTHER" id="PTHR30562">
    <property type="entry name" value="UVRC/OXIDOREDUCTASE"/>
    <property type="match status" value="1"/>
</dbReference>
<dbReference type="Pfam" id="PF01541">
    <property type="entry name" value="GIY-YIG"/>
    <property type="match status" value="1"/>
</dbReference>
<dbReference type="Pfam" id="PF14520">
    <property type="entry name" value="HHH_5"/>
    <property type="match status" value="1"/>
</dbReference>
<dbReference type="Pfam" id="PF02151">
    <property type="entry name" value="UVR"/>
    <property type="match status" value="1"/>
</dbReference>
<dbReference type="Pfam" id="PF22920">
    <property type="entry name" value="UvrC_RNaseH"/>
    <property type="match status" value="1"/>
</dbReference>
<dbReference type="Pfam" id="PF08459">
    <property type="entry name" value="UvrC_RNaseH_dom"/>
    <property type="match status" value="2"/>
</dbReference>
<dbReference type="SMART" id="SM00465">
    <property type="entry name" value="GIYc"/>
    <property type="match status" value="1"/>
</dbReference>
<dbReference type="SMART" id="SM00278">
    <property type="entry name" value="HhH1"/>
    <property type="match status" value="2"/>
</dbReference>
<dbReference type="SUPFAM" id="SSF46600">
    <property type="entry name" value="C-terminal UvrC-binding domain of UvrB"/>
    <property type="match status" value="1"/>
</dbReference>
<dbReference type="SUPFAM" id="SSF82771">
    <property type="entry name" value="GIY-YIG endonuclease"/>
    <property type="match status" value="1"/>
</dbReference>
<dbReference type="SUPFAM" id="SSF47781">
    <property type="entry name" value="RuvA domain 2-like"/>
    <property type="match status" value="1"/>
</dbReference>
<dbReference type="PROSITE" id="PS50164">
    <property type="entry name" value="GIY_YIG"/>
    <property type="match status" value="1"/>
</dbReference>
<dbReference type="PROSITE" id="PS50151">
    <property type="entry name" value="UVR"/>
    <property type="match status" value="1"/>
</dbReference>
<dbReference type="PROSITE" id="PS50165">
    <property type="entry name" value="UVRC"/>
    <property type="match status" value="1"/>
</dbReference>
<sequence length="638" mass="72717">MTSDATGSELIKSKLVDAPECAGVYQMFDVNKQVIYVGKAKNLKKRLTNYIKLDLDNKTLRMIANTCFLEYSVTSSEVEALLLEAQLIKKFQPKFNILLKDDKSFPFIKLRLDHDFPQLLKYRGRTRTLSDGKFFGPFASATAVNTTLTELQKIFKLRSCTDNYFNSRNRPCLQYEIKRCYAPCISKINKKDYAELVIQVTAFLQGHTKELQENLSKKMEELSSHMYFEEAAEIRDRIKALSYVQLKAGISDIVKDADIMAIVEKNGHYCVEVCLYRAGQACGTIPYFPTAMGNNTKEAILKYFLLQFYQKQQLPSEIIINNEVEDKEDVIEAIKKINNITKLNIILPISGGKAKLVQNATTNALFSLEQYLKKFAKNQEIMLEIKELFDLSEIPERIEIYDNSHIQGKFAVGVMVVAGKSGFDKKEYRVFSLSSHDSITGFSTLTNNLDPVVKQQYDTNGTYNTTVGDDYDMFRQVLTRRLTRLKQEPYKLPSLMIIDGGRGHVGIVKEVMDKFKMNIPFVCMSKGPDRNAGLEQFHMVGKEVFTLDKNLPVMKYLQILRDAAHSFAIKNHRLGRSRTIKLSSLDNIKGIGKTRKKSLLHYFGSYKAVCDATIDELVKVHGISKSLAEMIFRTLHQS</sequence>
<comment type="function">
    <text evidence="1">The UvrABC repair system catalyzes the recognition and processing of DNA lesions. UvrC both incises the 5' and 3' sides of the lesion. The N-terminal half is responsible for the 3' incision and the C-terminal half is responsible for the 5' incision.</text>
</comment>
<comment type="subunit">
    <text evidence="1">Interacts with UvrB in an incision complex.</text>
</comment>
<comment type="subcellular location">
    <subcellularLocation>
        <location evidence="1">Cytoplasm</location>
    </subcellularLocation>
</comment>
<comment type="similarity">
    <text evidence="1">Belongs to the UvrC family.</text>
</comment>
<proteinExistence type="inferred from homology"/>